<dbReference type="EC" id="7.1.2.2" evidence="1"/>
<dbReference type="EMBL" id="CP000360">
    <property type="protein sequence ID" value="ABF43332.1"/>
    <property type="molecule type" value="Genomic_DNA"/>
</dbReference>
<dbReference type="RefSeq" id="WP_011525129.1">
    <property type="nucleotide sequence ID" value="NC_008009.1"/>
</dbReference>
<dbReference type="SMR" id="Q1IIG8"/>
<dbReference type="STRING" id="204669.Acid345_4332"/>
<dbReference type="EnsemblBacteria" id="ABF43332">
    <property type="protein sequence ID" value="ABF43332"/>
    <property type="gene ID" value="Acid345_4332"/>
</dbReference>
<dbReference type="KEGG" id="aba:Acid345_4332"/>
<dbReference type="eggNOG" id="COG0055">
    <property type="taxonomic scope" value="Bacteria"/>
</dbReference>
<dbReference type="HOGENOM" id="CLU_022398_0_2_0"/>
<dbReference type="OrthoDB" id="9801639at2"/>
<dbReference type="Proteomes" id="UP000002432">
    <property type="component" value="Chromosome"/>
</dbReference>
<dbReference type="GO" id="GO:0005886">
    <property type="term" value="C:plasma membrane"/>
    <property type="evidence" value="ECO:0007669"/>
    <property type="project" value="UniProtKB-SubCell"/>
</dbReference>
<dbReference type="GO" id="GO:0045259">
    <property type="term" value="C:proton-transporting ATP synthase complex"/>
    <property type="evidence" value="ECO:0007669"/>
    <property type="project" value="UniProtKB-KW"/>
</dbReference>
<dbReference type="GO" id="GO:0005524">
    <property type="term" value="F:ATP binding"/>
    <property type="evidence" value="ECO:0007669"/>
    <property type="project" value="UniProtKB-UniRule"/>
</dbReference>
<dbReference type="GO" id="GO:0016887">
    <property type="term" value="F:ATP hydrolysis activity"/>
    <property type="evidence" value="ECO:0007669"/>
    <property type="project" value="InterPro"/>
</dbReference>
<dbReference type="GO" id="GO:0046933">
    <property type="term" value="F:proton-transporting ATP synthase activity, rotational mechanism"/>
    <property type="evidence" value="ECO:0007669"/>
    <property type="project" value="UniProtKB-UniRule"/>
</dbReference>
<dbReference type="CDD" id="cd18110">
    <property type="entry name" value="ATP-synt_F1_beta_C"/>
    <property type="match status" value="1"/>
</dbReference>
<dbReference type="CDD" id="cd18115">
    <property type="entry name" value="ATP-synt_F1_beta_N"/>
    <property type="match status" value="1"/>
</dbReference>
<dbReference type="CDD" id="cd01133">
    <property type="entry name" value="F1-ATPase_beta_CD"/>
    <property type="match status" value="1"/>
</dbReference>
<dbReference type="FunFam" id="1.10.1140.10:FF:000001">
    <property type="entry name" value="ATP synthase subunit beta"/>
    <property type="match status" value="1"/>
</dbReference>
<dbReference type="FunFam" id="3.40.50.300:FF:000026">
    <property type="entry name" value="ATP synthase subunit beta"/>
    <property type="match status" value="1"/>
</dbReference>
<dbReference type="Gene3D" id="2.40.10.170">
    <property type="match status" value="1"/>
</dbReference>
<dbReference type="Gene3D" id="1.10.1140.10">
    <property type="entry name" value="Bovine Mitochondrial F1-atpase, Atp Synthase Beta Chain, Chain D, domain 3"/>
    <property type="match status" value="1"/>
</dbReference>
<dbReference type="Gene3D" id="3.40.50.300">
    <property type="entry name" value="P-loop containing nucleotide triphosphate hydrolases"/>
    <property type="match status" value="1"/>
</dbReference>
<dbReference type="HAMAP" id="MF_01347">
    <property type="entry name" value="ATP_synth_beta_bact"/>
    <property type="match status" value="1"/>
</dbReference>
<dbReference type="InterPro" id="IPR003593">
    <property type="entry name" value="AAA+_ATPase"/>
</dbReference>
<dbReference type="InterPro" id="IPR055190">
    <property type="entry name" value="ATP-synt_VA_C"/>
</dbReference>
<dbReference type="InterPro" id="IPR005722">
    <property type="entry name" value="ATP_synth_F1_bsu"/>
</dbReference>
<dbReference type="InterPro" id="IPR020003">
    <property type="entry name" value="ATPase_a/bsu_AS"/>
</dbReference>
<dbReference type="InterPro" id="IPR050053">
    <property type="entry name" value="ATPase_alpha/beta_chains"/>
</dbReference>
<dbReference type="InterPro" id="IPR004100">
    <property type="entry name" value="ATPase_F1/V1/A1_a/bsu_N"/>
</dbReference>
<dbReference type="InterPro" id="IPR036121">
    <property type="entry name" value="ATPase_F1/V1/A1_a/bsu_N_sf"/>
</dbReference>
<dbReference type="InterPro" id="IPR000194">
    <property type="entry name" value="ATPase_F1/V1/A1_a/bsu_nucl-bd"/>
</dbReference>
<dbReference type="InterPro" id="IPR024034">
    <property type="entry name" value="ATPase_F1/V1_b/a_C"/>
</dbReference>
<dbReference type="InterPro" id="IPR027417">
    <property type="entry name" value="P-loop_NTPase"/>
</dbReference>
<dbReference type="NCBIfam" id="TIGR01039">
    <property type="entry name" value="atpD"/>
    <property type="match status" value="1"/>
</dbReference>
<dbReference type="PANTHER" id="PTHR15184">
    <property type="entry name" value="ATP SYNTHASE"/>
    <property type="match status" value="1"/>
</dbReference>
<dbReference type="PANTHER" id="PTHR15184:SF71">
    <property type="entry name" value="ATP SYNTHASE SUBUNIT BETA, MITOCHONDRIAL"/>
    <property type="match status" value="1"/>
</dbReference>
<dbReference type="Pfam" id="PF00006">
    <property type="entry name" value="ATP-synt_ab"/>
    <property type="match status" value="1"/>
</dbReference>
<dbReference type="Pfam" id="PF02874">
    <property type="entry name" value="ATP-synt_ab_N"/>
    <property type="match status" value="1"/>
</dbReference>
<dbReference type="Pfam" id="PF22919">
    <property type="entry name" value="ATP-synt_VA_C"/>
    <property type="match status" value="1"/>
</dbReference>
<dbReference type="SMART" id="SM00382">
    <property type="entry name" value="AAA"/>
    <property type="match status" value="1"/>
</dbReference>
<dbReference type="SUPFAM" id="SSF47917">
    <property type="entry name" value="C-terminal domain of alpha and beta subunits of F1 ATP synthase"/>
    <property type="match status" value="1"/>
</dbReference>
<dbReference type="SUPFAM" id="SSF50615">
    <property type="entry name" value="N-terminal domain of alpha and beta subunits of F1 ATP synthase"/>
    <property type="match status" value="1"/>
</dbReference>
<dbReference type="SUPFAM" id="SSF52540">
    <property type="entry name" value="P-loop containing nucleoside triphosphate hydrolases"/>
    <property type="match status" value="1"/>
</dbReference>
<dbReference type="PROSITE" id="PS00152">
    <property type="entry name" value="ATPASE_ALPHA_BETA"/>
    <property type="match status" value="1"/>
</dbReference>
<reference key="1">
    <citation type="journal article" date="2009" name="Appl. Environ. Microbiol.">
        <title>Three genomes from the phylum Acidobacteria provide insight into the lifestyles of these microorganisms in soils.</title>
        <authorList>
            <person name="Ward N.L."/>
            <person name="Challacombe J.F."/>
            <person name="Janssen P.H."/>
            <person name="Henrissat B."/>
            <person name="Coutinho P.M."/>
            <person name="Wu M."/>
            <person name="Xie G."/>
            <person name="Haft D.H."/>
            <person name="Sait M."/>
            <person name="Badger J."/>
            <person name="Barabote R.D."/>
            <person name="Bradley B."/>
            <person name="Brettin T.S."/>
            <person name="Brinkac L.M."/>
            <person name="Bruce D."/>
            <person name="Creasy T."/>
            <person name="Daugherty S.C."/>
            <person name="Davidsen T.M."/>
            <person name="DeBoy R.T."/>
            <person name="Detter J.C."/>
            <person name="Dodson R.J."/>
            <person name="Durkin A.S."/>
            <person name="Ganapathy A."/>
            <person name="Gwinn-Giglio M."/>
            <person name="Han C.S."/>
            <person name="Khouri H."/>
            <person name="Kiss H."/>
            <person name="Kothari S.P."/>
            <person name="Madupu R."/>
            <person name="Nelson K.E."/>
            <person name="Nelson W.C."/>
            <person name="Paulsen I."/>
            <person name="Penn K."/>
            <person name="Ren Q."/>
            <person name="Rosovitz M.J."/>
            <person name="Selengut J.D."/>
            <person name="Shrivastava S."/>
            <person name="Sullivan S.A."/>
            <person name="Tapia R."/>
            <person name="Thompson L.S."/>
            <person name="Watkins K.L."/>
            <person name="Yang Q."/>
            <person name="Yu C."/>
            <person name="Zafar N."/>
            <person name="Zhou L."/>
            <person name="Kuske C.R."/>
        </authorList>
    </citation>
    <scope>NUCLEOTIDE SEQUENCE [LARGE SCALE GENOMIC DNA]</scope>
    <source>
        <strain>Ellin345</strain>
    </source>
</reference>
<evidence type="ECO:0000255" key="1">
    <source>
        <dbReference type="HAMAP-Rule" id="MF_01347"/>
    </source>
</evidence>
<comment type="function">
    <text evidence="1">Produces ATP from ADP in the presence of a proton gradient across the membrane. The catalytic sites are hosted primarily by the beta subunits.</text>
</comment>
<comment type="catalytic activity">
    <reaction evidence="1">
        <text>ATP + H2O + 4 H(+)(in) = ADP + phosphate + 5 H(+)(out)</text>
        <dbReference type="Rhea" id="RHEA:57720"/>
        <dbReference type="ChEBI" id="CHEBI:15377"/>
        <dbReference type="ChEBI" id="CHEBI:15378"/>
        <dbReference type="ChEBI" id="CHEBI:30616"/>
        <dbReference type="ChEBI" id="CHEBI:43474"/>
        <dbReference type="ChEBI" id="CHEBI:456216"/>
        <dbReference type="EC" id="7.1.2.2"/>
    </reaction>
</comment>
<comment type="subunit">
    <text evidence="1">F-type ATPases have 2 components, CF(1) - the catalytic core - and CF(0) - the membrane proton channel. CF(1) has five subunits: alpha(3), beta(3), gamma(1), delta(1), epsilon(1). CF(0) has three main subunits: a(1), b(2) and c(9-12). The alpha and beta chains form an alternating ring which encloses part of the gamma chain. CF(1) is attached to CF(0) by a central stalk formed by the gamma and epsilon chains, while a peripheral stalk is formed by the delta and b chains.</text>
</comment>
<comment type="subcellular location">
    <subcellularLocation>
        <location evidence="1">Cell inner membrane</location>
        <topology evidence="1">Peripheral membrane protein</topology>
    </subcellularLocation>
</comment>
<comment type="similarity">
    <text evidence="1">Belongs to the ATPase alpha/beta chains family.</text>
</comment>
<gene>
    <name evidence="1" type="primary">atpD</name>
    <name type="ordered locus">Acid345_4332</name>
</gene>
<organism>
    <name type="scientific">Koribacter versatilis (strain Ellin345)</name>
    <dbReference type="NCBI Taxonomy" id="204669"/>
    <lineage>
        <taxon>Bacteria</taxon>
        <taxon>Pseudomonadati</taxon>
        <taxon>Acidobacteriota</taxon>
        <taxon>Terriglobia</taxon>
        <taxon>Terriglobales</taxon>
        <taxon>Candidatus Korobacteraceae</taxon>
        <taxon>Candidatus Korobacter</taxon>
    </lineage>
</organism>
<feature type="chain" id="PRO_0000254196" description="ATP synthase subunit beta">
    <location>
        <begin position="1"/>
        <end position="480"/>
    </location>
</feature>
<feature type="binding site" evidence="1">
    <location>
        <begin position="158"/>
        <end position="165"/>
    </location>
    <ligand>
        <name>ATP</name>
        <dbReference type="ChEBI" id="CHEBI:30616"/>
    </ligand>
</feature>
<keyword id="KW-0066">ATP synthesis</keyword>
<keyword id="KW-0067">ATP-binding</keyword>
<keyword id="KW-0997">Cell inner membrane</keyword>
<keyword id="KW-1003">Cell membrane</keyword>
<keyword id="KW-0139">CF(1)</keyword>
<keyword id="KW-0375">Hydrogen ion transport</keyword>
<keyword id="KW-0406">Ion transport</keyword>
<keyword id="KW-0472">Membrane</keyword>
<keyword id="KW-0547">Nucleotide-binding</keyword>
<keyword id="KW-1185">Reference proteome</keyword>
<keyword id="KW-1278">Translocase</keyword>
<keyword id="KW-0813">Transport</keyword>
<name>ATPB_KORVE</name>
<proteinExistence type="inferred from homology"/>
<protein>
    <recommendedName>
        <fullName evidence="1">ATP synthase subunit beta</fullName>
        <ecNumber evidence="1">7.1.2.2</ecNumber>
    </recommendedName>
    <alternativeName>
        <fullName evidence="1">ATP synthase F1 sector subunit beta</fullName>
    </alternativeName>
    <alternativeName>
        <fullName evidence="1">F-ATPase subunit beta</fullName>
    </alternativeName>
</protein>
<accession>Q1IIG8</accession>
<sequence length="480" mass="52181">MAENFGKVIQISGPAVDVQFSETTLPEIYTALRVVSEGFDVPTPINVVLEIQQHLGEGRVRCVAMEPTEGMVRGMKAIDMGGPISVPVGRGTLGRVMNVIGEPVDQLGPIMVEKRNPIHRQAPAFDEQATTAEMFETGIKVIDLIQPFLKGGKIGLFGGAGVGKTVVIQELINNVAKQHGGFSVFGGVGERTREGNDLWLEFTEAGVITPGDPSKSKAALVYGQMTEPPGARLRVALTALTVAEYFRDEEGTDTLLFIDNIFRFTQAGSEVSTLLGRMPSAVGYQPNLATEMGELQERITSTKRGSVTSVQAIYVPADDLTDPAPATTFAHLDATTVLSRALTEIGIYPAVDPLGSTSRILDPRIVGQEHYDVAQGVKGILQQYKDLQDIIAILGIDELSEDQKLTVSRARKIQRFLSQPFHVAEQFTGFPGRYVKIADTVRSFREILQGKHDEIPEQAFYMKGTIDEVHEAAEKMKANA</sequence>